<accession>Q3SHS6</accession>
<reference key="1">
    <citation type="journal article" date="2006" name="J. Bacteriol.">
        <title>The genome sequence of the obligately chemolithoautotrophic, facultatively anaerobic bacterium Thiobacillus denitrificans.</title>
        <authorList>
            <person name="Beller H.R."/>
            <person name="Chain P.S."/>
            <person name="Letain T.E."/>
            <person name="Chakicherla A."/>
            <person name="Larimer F.W."/>
            <person name="Richardson P.M."/>
            <person name="Coleman M.A."/>
            <person name="Wood A.P."/>
            <person name="Kelly D.P."/>
        </authorList>
    </citation>
    <scope>NUCLEOTIDE SEQUENCE [LARGE SCALE GENOMIC DNA]</scope>
    <source>
        <strain>ATCC 25259 / T1</strain>
    </source>
</reference>
<gene>
    <name evidence="1" type="primary">rpsT</name>
    <name type="ordered locus">Tbd_1854</name>
</gene>
<protein>
    <recommendedName>
        <fullName evidence="1">Small ribosomal subunit protein bS20</fullName>
    </recommendedName>
    <alternativeName>
        <fullName evidence="3">30S ribosomal protein S20</fullName>
    </alternativeName>
</protein>
<keyword id="KW-1185">Reference proteome</keyword>
<keyword id="KW-0687">Ribonucleoprotein</keyword>
<keyword id="KW-0689">Ribosomal protein</keyword>
<keyword id="KW-0694">RNA-binding</keyword>
<keyword id="KW-0699">rRNA-binding</keyword>
<name>RS20_THIDA</name>
<feature type="chain" id="PRO_0000224991" description="Small ribosomal subunit protein bS20">
    <location>
        <begin position="1"/>
        <end position="87"/>
    </location>
</feature>
<feature type="region of interest" description="Disordered" evidence="2">
    <location>
        <begin position="1"/>
        <end position="28"/>
    </location>
</feature>
<feature type="compositionally biased region" description="Basic and acidic residues" evidence="2">
    <location>
        <begin position="17"/>
        <end position="28"/>
    </location>
</feature>
<comment type="function">
    <text evidence="1">Binds directly to 16S ribosomal RNA.</text>
</comment>
<comment type="similarity">
    <text evidence="1">Belongs to the bacterial ribosomal protein bS20 family.</text>
</comment>
<proteinExistence type="inferred from homology"/>
<evidence type="ECO:0000255" key="1">
    <source>
        <dbReference type="HAMAP-Rule" id="MF_00500"/>
    </source>
</evidence>
<evidence type="ECO:0000256" key="2">
    <source>
        <dbReference type="SAM" id="MobiDB-lite"/>
    </source>
</evidence>
<evidence type="ECO:0000305" key="3"/>
<sequence length="87" mass="9511">MANSAQARKRARQASAQRDHNMSQRSELRTAIKKVRKAIEAGDKAAAQAVYQSSVSVIDSIADKQIIHKNKAARHKSRLSLAVKGMA</sequence>
<organism>
    <name type="scientific">Thiobacillus denitrificans (strain ATCC 25259 / T1)</name>
    <dbReference type="NCBI Taxonomy" id="292415"/>
    <lineage>
        <taxon>Bacteria</taxon>
        <taxon>Pseudomonadati</taxon>
        <taxon>Pseudomonadota</taxon>
        <taxon>Betaproteobacteria</taxon>
        <taxon>Nitrosomonadales</taxon>
        <taxon>Thiobacillaceae</taxon>
        <taxon>Thiobacillus</taxon>
    </lineage>
</organism>
<dbReference type="EMBL" id="CP000116">
    <property type="protein sequence ID" value="AAZ97807.1"/>
    <property type="molecule type" value="Genomic_DNA"/>
</dbReference>
<dbReference type="RefSeq" id="WP_011312366.1">
    <property type="nucleotide sequence ID" value="NC_007404.1"/>
</dbReference>
<dbReference type="SMR" id="Q3SHS6"/>
<dbReference type="STRING" id="292415.Tbd_1854"/>
<dbReference type="KEGG" id="tbd:Tbd_1854"/>
<dbReference type="eggNOG" id="COG0268">
    <property type="taxonomic scope" value="Bacteria"/>
</dbReference>
<dbReference type="HOGENOM" id="CLU_160655_4_0_4"/>
<dbReference type="OrthoDB" id="9807974at2"/>
<dbReference type="Proteomes" id="UP000008291">
    <property type="component" value="Chromosome"/>
</dbReference>
<dbReference type="GO" id="GO:0005829">
    <property type="term" value="C:cytosol"/>
    <property type="evidence" value="ECO:0007669"/>
    <property type="project" value="TreeGrafter"/>
</dbReference>
<dbReference type="GO" id="GO:0015935">
    <property type="term" value="C:small ribosomal subunit"/>
    <property type="evidence" value="ECO:0007669"/>
    <property type="project" value="TreeGrafter"/>
</dbReference>
<dbReference type="GO" id="GO:0070181">
    <property type="term" value="F:small ribosomal subunit rRNA binding"/>
    <property type="evidence" value="ECO:0007669"/>
    <property type="project" value="TreeGrafter"/>
</dbReference>
<dbReference type="GO" id="GO:0003735">
    <property type="term" value="F:structural constituent of ribosome"/>
    <property type="evidence" value="ECO:0007669"/>
    <property type="project" value="InterPro"/>
</dbReference>
<dbReference type="GO" id="GO:0006412">
    <property type="term" value="P:translation"/>
    <property type="evidence" value="ECO:0007669"/>
    <property type="project" value="UniProtKB-UniRule"/>
</dbReference>
<dbReference type="FunFam" id="1.20.58.110:FF:000001">
    <property type="entry name" value="30S ribosomal protein S20"/>
    <property type="match status" value="1"/>
</dbReference>
<dbReference type="Gene3D" id="1.20.58.110">
    <property type="entry name" value="Ribosomal protein S20"/>
    <property type="match status" value="1"/>
</dbReference>
<dbReference type="HAMAP" id="MF_00500">
    <property type="entry name" value="Ribosomal_bS20"/>
    <property type="match status" value="1"/>
</dbReference>
<dbReference type="InterPro" id="IPR002583">
    <property type="entry name" value="Ribosomal_bS20"/>
</dbReference>
<dbReference type="InterPro" id="IPR036510">
    <property type="entry name" value="Ribosomal_bS20_sf"/>
</dbReference>
<dbReference type="NCBIfam" id="TIGR00029">
    <property type="entry name" value="S20"/>
    <property type="match status" value="1"/>
</dbReference>
<dbReference type="PANTHER" id="PTHR33398">
    <property type="entry name" value="30S RIBOSOMAL PROTEIN S20"/>
    <property type="match status" value="1"/>
</dbReference>
<dbReference type="PANTHER" id="PTHR33398:SF1">
    <property type="entry name" value="SMALL RIBOSOMAL SUBUNIT PROTEIN BS20C"/>
    <property type="match status" value="1"/>
</dbReference>
<dbReference type="Pfam" id="PF01649">
    <property type="entry name" value="Ribosomal_S20p"/>
    <property type="match status" value="1"/>
</dbReference>
<dbReference type="SUPFAM" id="SSF46992">
    <property type="entry name" value="Ribosomal protein S20"/>
    <property type="match status" value="1"/>
</dbReference>